<accession>P0C0T4</accession>
<accession>A2TBM7</accession>
<accession>D6VYX4</accession>
<accession>P05758</accession>
<accession>P07282</accession>
<reference key="1">
    <citation type="journal article" date="1997" name="Nature">
        <title>The nucleotide sequence of Saccharomyces cerevisiae chromosome XII.</title>
        <authorList>
            <person name="Johnston M."/>
            <person name="Hillier L.W."/>
            <person name="Riles L."/>
            <person name="Albermann K."/>
            <person name="Andre B."/>
            <person name="Ansorge W."/>
            <person name="Benes V."/>
            <person name="Brueckner M."/>
            <person name="Delius H."/>
            <person name="Dubois E."/>
            <person name="Duesterhoeft A."/>
            <person name="Entian K.-D."/>
            <person name="Floeth M."/>
            <person name="Goffeau A."/>
            <person name="Hebling U."/>
            <person name="Heumann K."/>
            <person name="Heuss-Neitzel D."/>
            <person name="Hilbert H."/>
            <person name="Hilger F."/>
            <person name="Kleine K."/>
            <person name="Koetter P."/>
            <person name="Louis E.J."/>
            <person name="Messenguy F."/>
            <person name="Mewes H.-W."/>
            <person name="Miosga T."/>
            <person name="Moestl D."/>
            <person name="Mueller-Auer S."/>
            <person name="Nentwich U."/>
            <person name="Obermaier B."/>
            <person name="Piravandi E."/>
            <person name="Pohl T.M."/>
            <person name="Portetelle D."/>
            <person name="Purnelle B."/>
            <person name="Rechmann S."/>
            <person name="Rieger M."/>
            <person name="Rinke M."/>
            <person name="Rose M."/>
            <person name="Scharfe M."/>
            <person name="Scherens B."/>
            <person name="Scholler P."/>
            <person name="Schwager C."/>
            <person name="Schwarz S."/>
            <person name="Underwood A.P."/>
            <person name="Urrestarazu L.A."/>
            <person name="Vandenbol M."/>
            <person name="Verhasselt P."/>
            <person name="Vierendeels F."/>
            <person name="Voet M."/>
            <person name="Volckaert G."/>
            <person name="Voss H."/>
            <person name="Wambutt R."/>
            <person name="Wedler E."/>
            <person name="Wedler H."/>
            <person name="Zimmermann F.K."/>
            <person name="Zollner A."/>
            <person name="Hani J."/>
            <person name="Hoheisel J.D."/>
        </authorList>
    </citation>
    <scope>NUCLEOTIDE SEQUENCE [LARGE SCALE GENOMIC DNA]</scope>
    <source>
        <strain>ATCC 204508 / S288c</strain>
    </source>
</reference>
<reference key="2">
    <citation type="journal article" date="2014" name="G3 (Bethesda)">
        <title>The reference genome sequence of Saccharomyces cerevisiae: Then and now.</title>
        <authorList>
            <person name="Engel S.R."/>
            <person name="Dietrich F.S."/>
            <person name="Fisk D.G."/>
            <person name="Binkley G."/>
            <person name="Balakrishnan R."/>
            <person name="Costanzo M.C."/>
            <person name="Dwight S.S."/>
            <person name="Hitz B.C."/>
            <person name="Karra K."/>
            <person name="Nash R.S."/>
            <person name="Weng S."/>
            <person name="Wong E.D."/>
            <person name="Lloyd P."/>
            <person name="Skrzypek M.S."/>
            <person name="Miyasato S.R."/>
            <person name="Simison M."/>
            <person name="Cherry J.M."/>
        </authorList>
    </citation>
    <scope>GENOME REANNOTATION</scope>
    <source>
        <strain>ATCC 204508 / S288c</strain>
    </source>
</reference>
<reference key="3">
    <citation type="journal article" date="2007" name="Genome Res.">
        <title>Approaching a complete repository of sequence-verified protein-encoding clones for Saccharomyces cerevisiae.</title>
        <authorList>
            <person name="Hu Y."/>
            <person name="Rolfs A."/>
            <person name="Bhullar B."/>
            <person name="Murthy T.V.S."/>
            <person name="Zhu C."/>
            <person name="Berger M.F."/>
            <person name="Camargo A.A."/>
            <person name="Kelley F."/>
            <person name="McCarron S."/>
            <person name="Jepson D."/>
            <person name="Richardson A."/>
            <person name="Raphael J."/>
            <person name="Moreira D."/>
            <person name="Taycher E."/>
            <person name="Zuo D."/>
            <person name="Mohr S."/>
            <person name="Kane M.F."/>
            <person name="Williamson J."/>
            <person name="Simpson A.J.G."/>
            <person name="Bulyk M.L."/>
            <person name="Harlow E."/>
            <person name="Marsischky G."/>
            <person name="Kolodner R.D."/>
            <person name="LaBaer J."/>
        </authorList>
    </citation>
    <scope>NUCLEOTIDE SEQUENCE [GENOMIC DNA]</scope>
    <source>
        <strain>ATCC 204508 / S288c</strain>
    </source>
</reference>
<reference key="4">
    <citation type="journal article" date="2007" name="Proc. Natl. Acad. Sci. U.S.A.">
        <title>High-density yeast-tiling array reveals previously undiscovered introns and extensive regulation of meiotic splicing.</title>
        <authorList>
            <person name="Juneau K."/>
            <person name="Palm C."/>
            <person name="Miranda M."/>
            <person name="Davis R.W."/>
        </authorList>
    </citation>
    <scope>NUCLEOTIDE SEQUENCE [MRNA] OF 1-62</scope>
    <source>
        <strain>ATCC 201390 / BY4743</strain>
    </source>
</reference>
<reference key="5">
    <citation type="journal article" date="1984" name="Mol. Gen. Genet.">
        <title>Yeast ribosomal proteins. VIII. Isolation of two proteins and sequence characterization of twenty-four proteins from cytoplasmic ribosomes.</title>
        <authorList>
            <person name="Otaka E."/>
            <person name="Higo K."/>
            <person name="Itoh T."/>
        </authorList>
    </citation>
    <scope>PARTIAL PROTEIN SEQUENCE OF 15-22</scope>
</reference>
<reference key="6">
    <citation type="journal article" date="1998" name="Yeast">
        <title>The list of cytoplasmic ribosomal proteins of Saccharomyces cerevisiae.</title>
        <authorList>
            <person name="Planta R.J."/>
            <person name="Mager W.H."/>
        </authorList>
    </citation>
    <scope>NOMENCLATURE</scope>
    <scope>SUBUNIT</scope>
</reference>
<reference key="7">
    <citation type="journal article" date="2003" name="Nature">
        <title>Global analysis of protein localization in budding yeast.</title>
        <authorList>
            <person name="Huh W.-K."/>
            <person name="Falvo J.V."/>
            <person name="Gerke L.C."/>
            <person name="Carroll A.S."/>
            <person name="Howson R.W."/>
            <person name="Weissman J.S."/>
            <person name="O'Shea E.K."/>
        </authorList>
    </citation>
    <scope>SUBCELLULAR LOCATION [LARGE SCALE ANALYSIS]</scope>
</reference>
<reference key="8">
    <citation type="journal article" date="2003" name="Nature">
        <title>Global analysis of protein expression in yeast.</title>
        <authorList>
            <person name="Ghaemmaghami S."/>
            <person name="Huh W.-K."/>
            <person name="Bower K."/>
            <person name="Howson R.W."/>
            <person name="Belle A."/>
            <person name="Dephoure N."/>
            <person name="O'Shea E.K."/>
            <person name="Weissman J.S."/>
        </authorList>
    </citation>
    <scope>LEVEL OF PROTEIN EXPRESSION [LARGE SCALE ANALYSIS]</scope>
</reference>
<reference key="9">
    <citation type="journal article" date="2010" name="Biochemistry">
        <title>Identification of protein N-terminal methyltransferases in yeast and humans.</title>
        <authorList>
            <person name="Webb K.J."/>
            <person name="Lipson R.S."/>
            <person name="Al-Hadid Q."/>
            <person name="Whitelegge J.P."/>
            <person name="Clarke S.G."/>
        </authorList>
    </citation>
    <scope>METHYLATION AT PRO-2 BY NTM1/TAE1</scope>
</reference>
<reference key="10">
    <citation type="journal article" date="2011" name="Science">
        <title>The structure of the eukaryotic ribosome at 3.0 A resolution.</title>
        <authorList>
            <person name="Ben-Shem A."/>
            <person name="Garreau de Loubresse N."/>
            <person name="Melnikov S."/>
            <person name="Jenner L."/>
            <person name="Yusupova G."/>
            <person name="Yusupov M."/>
        </authorList>
    </citation>
    <scope>SUBUNIT</scope>
    <scope>SUBCELLULAR LOCATION</scope>
</reference>
<reference key="11">
    <citation type="journal article" date="2014" name="Curr. Opin. Struct. Biol.">
        <title>A new system for naming ribosomal proteins.</title>
        <authorList>
            <person name="Ban N."/>
            <person name="Beckmann R."/>
            <person name="Cate J.H.D."/>
            <person name="Dinman J.D."/>
            <person name="Dragon F."/>
            <person name="Ellis S.R."/>
            <person name="Lafontaine D.L.J."/>
            <person name="Lindahl L."/>
            <person name="Liljas A."/>
            <person name="Lipton J.M."/>
            <person name="McAlear M.A."/>
            <person name="Moore P.B."/>
            <person name="Noller H.F."/>
            <person name="Ortega J."/>
            <person name="Panse V.G."/>
            <person name="Ramakrishnan V."/>
            <person name="Spahn C.M.T."/>
            <person name="Steitz T.A."/>
            <person name="Tchorzewski M."/>
            <person name="Tollervey D."/>
            <person name="Warren A.J."/>
            <person name="Williamson J.R."/>
            <person name="Wilson D."/>
            <person name="Yonath A."/>
            <person name="Yusupov M."/>
        </authorList>
    </citation>
    <scope>NOMENCLATURE</scope>
</reference>
<evidence type="ECO:0000256" key="1">
    <source>
        <dbReference type="SAM" id="MobiDB-lite"/>
    </source>
</evidence>
<evidence type="ECO:0000269" key="2">
    <source>
    </source>
</evidence>
<evidence type="ECO:0000269" key="3">
    <source>
    </source>
</evidence>
<evidence type="ECO:0000269" key="4">
    <source>
    </source>
</evidence>
<evidence type="ECO:0000269" key="5">
    <source>
    </source>
</evidence>
<evidence type="ECO:0000303" key="6">
    <source>
    </source>
</evidence>
<evidence type="ECO:0000303" key="7">
    <source>
    </source>
</evidence>
<evidence type="ECO:0000305" key="8"/>
<evidence type="ECO:0000305" key="9">
    <source>
    </source>
</evidence>
<evidence type="ECO:0000305" key="10">
    <source>
    </source>
</evidence>
<comment type="function">
    <text evidence="9">Component of the ribosome, a large ribonucleoprotein complex responsible for the synthesis of proteins in the cell. The small ribosomal subunit (SSU) binds messenger RNAs (mRNAs) and translates the encoded message by selecting cognate aminoacyl-transfer RNA (tRNA) molecules. The large subunit (LSU) contains the ribosomal catalytic site termed the peptidyl transferase center (PTC), which catalyzes the formation of peptide bonds, thereby polymerizing the amino acids delivered by tRNAs into a polypeptide chain. The nascent polypeptides leave the ribosome through a tunnel in the LSU and interact with protein factors that function in enzymatic processing, targeting, and the membrane insertion of nascent chains at the exit of the ribosomal tunnel.</text>
</comment>
<comment type="subunit">
    <text evidence="5 10">Component of the small ribosomal subunit (SSU). Mature yeast ribosomes consist of a small (40S) and a large (60S) subunit. The 40S small subunit contains 1 molecule of ribosomal RNA (18S rRNA) and 33 different proteins (encoded by 57 genes). The large 60S subunit contains 3 rRNA molecules (25S, 5.8S and 5S rRNA) and 46 different proteins (encoded by 81 genes) (PubMed:22096102, PubMed:9559554).</text>
</comment>
<comment type="subcellular location">
    <subcellularLocation>
        <location evidence="2 5">Cytoplasm</location>
    </subcellularLocation>
</comment>
<comment type="miscellaneous">
    <text>It is presumed that the precursor part of S25 is engaged in assembling of the small subunit, thus being essential in ribosome maturation.</text>
</comment>
<comment type="miscellaneous">
    <text evidence="3">Present with 162000 molecules/cell in log phase SD medium.</text>
</comment>
<comment type="miscellaneous">
    <text evidence="8">There are 2 genes for eS25 in yeast.</text>
</comment>
<comment type="similarity">
    <text evidence="8">Belongs to the eukaryotic ribosomal protein eS25 family.</text>
</comment>
<keyword id="KW-0963">Cytoplasm</keyword>
<keyword id="KW-0903">Direct protein sequencing</keyword>
<keyword id="KW-0488">Methylation</keyword>
<keyword id="KW-1185">Reference proteome</keyword>
<keyword id="KW-0687">Ribonucleoprotein</keyword>
<keyword id="KW-0689">Ribosomal protein</keyword>
<sequence>MPPKQQLSKAAKAAAALAGGKKSKKKWSKKSMKDRAQHAVILDQEKYDRILKEVPTYRYVSVSVLVDRLKIGGSLARIALRHLEKEGIIKPISKHSKQAIYTRAAASE</sequence>
<feature type="initiator methionine" description="Removed">
    <location>
        <position position="1"/>
    </location>
</feature>
<feature type="chain" id="PRO_0000030634" description="Small ribosomal subunit protein eS25B">
    <location>
        <begin position="2"/>
        <end position="108"/>
    </location>
</feature>
<feature type="region of interest" description="Disordered" evidence="1">
    <location>
        <begin position="1"/>
        <end position="30"/>
    </location>
</feature>
<feature type="compositionally biased region" description="Low complexity" evidence="1">
    <location>
        <begin position="1"/>
        <end position="20"/>
    </location>
</feature>
<feature type="compositionally biased region" description="Basic residues" evidence="1">
    <location>
        <begin position="21"/>
        <end position="30"/>
    </location>
</feature>
<feature type="modified residue" description="N,N-dimethylproline; by NTM1" evidence="4">
    <location>
        <position position="2"/>
    </location>
</feature>
<name>RS25B_YEAST</name>
<dbReference type="EMBL" id="U19028">
    <property type="protein sequence ID" value="AAB67260.1"/>
    <property type="molecule type" value="Genomic_DNA"/>
</dbReference>
<dbReference type="EMBL" id="AY693146">
    <property type="protein sequence ID" value="AAT93165.1"/>
    <property type="molecule type" value="Genomic_DNA"/>
</dbReference>
<dbReference type="EMBL" id="EF123130">
    <property type="protein sequence ID" value="ABM97474.1"/>
    <property type="molecule type" value="mRNA"/>
</dbReference>
<dbReference type="EMBL" id="BK006945">
    <property type="protein sequence ID" value="DAA09640.1"/>
    <property type="molecule type" value="Genomic_DNA"/>
</dbReference>
<dbReference type="PIR" id="S51338">
    <property type="entry name" value="S51338"/>
</dbReference>
<dbReference type="RefSeq" id="NP_013437.1">
    <property type="nucleotide sequence ID" value="NM_001182222.1"/>
</dbReference>
<dbReference type="SMR" id="P0C0T4"/>
<dbReference type="BioGRID" id="31597">
    <property type="interactions" value="146"/>
</dbReference>
<dbReference type="ComplexPortal" id="CPX-1599">
    <property type="entry name" value="40S cytosolic small ribosomal subunit"/>
</dbReference>
<dbReference type="DIP" id="DIP-5077N"/>
<dbReference type="FunCoup" id="P0C0T4">
    <property type="interactions" value="1115"/>
</dbReference>
<dbReference type="IntAct" id="P0C0T4">
    <property type="interactions" value="43"/>
</dbReference>
<dbReference type="MINT" id="P0C0T4"/>
<dbReference type="STRING" id="4932.YLR333C"/>
<dbReference type="iPTMnet" id="P0C0T4"/>
<dbReference type="PaxDb" id="4932-YLR333C"/>
<dbReference type="PeptideAtlas" id="P0C0T4"/>
<dbReference type="EnsemblFungi" id="YLR333C_mRNA">
    <property type="protein sequence ID" value="YLR333C"/>
    <property type="gene ID" value="YLR333C"/>
</dbReference>
<dbReference type="GeneID" id="851045"/>
<dbReference type="KEGG" id="sce:YLR333C"/>
<dbReference type="AGR" id="SGD:S000004325"/>
<dbReference type="SGD" id="S000004325">
    <property type="gene designation" value="RPS25B"/>
</dbReference>
<dbReference type="VEuPathDB" id="FungiDB:YLR333C"/>
<dbReference type="eggNOG" id="KOG1767">
    <property type="taxonomic scope" value="Eukaryota"/>
</dbReference>
<dbReference type="GeneTree" id="ENSGT00390000004856"/>
<dbReference type="HOGENOM" id="CLU_129470_4_0_1"/>
<dbReference type="InParanoid" id="P0C0T4"/>
<dbReference type="OMA" id="CASAYEM"/>
<dbReference type="OrthoDB" id="10263513at2759"/>
<dbReference type="BioCyc" id="YEAST:G3O-32413-MONOMER"/>
<dbReference type="BioGRID-ORCS" id="851045">
    <property type="hits" value="2 hits in 10 CRISPR screens"/>
</dbReference>
<dbReference type="PRO" id="PR:P0C0T4"/>
<dbReference type="Proteomes" id="UP000002311">
    <property type="component" value="Chromosome XII"/>
</dbReference>
<dbReference type="RNAct" id="P0C0T4">
    <property type="molecule type" value="protein"/>
</dbReference>
<dbReference type="GO" id="GO:0005829">
    <property type="term" value="C:cytosol"/>
    <property type="evidence" value="ECO:0000304"/>
    <property type="project" value="Reactome"/>
</dbReference>
<dbReference type="GO" id="GO:0022627">
    <property type="term" value="C:cytosolic small ribosomal subunit"/>
    <property type="evidence" value="ECO:0000314"/>
    <property type="project" value="SGD"/>
</dbReference>
<dbReference type="GO" id="GO:0003735">
    <property type="term" value="F:structural constituent of ribosome"/>
    <property type="evidence" value="ECO:0000314"/>
    <property type="project" value="SGD"/>
</dbReference>
<dbReference type="GO" id="GO:0002181">
    <property type="term" value="P:cytoplasmic translation"/>
    <property type="evidence" value="ECO:0000305"/>
    <property type="project" value="SGD"/>
</dbReference>
<dbReference type="FunFam" id="3.30.63.20:FF:000001">
    <property type="entry name" value="40S ribosomal protein S25"/>
    <property type="match status" value="1"/>
</dbReference>
<dbReference type="Gene3D" id="3.30.63.20">
    <property type="match status" value="1"/>
</dbReference>
<dbReference type="InterPro" id="IPR004977">
    <property type="entry name" value="Ribosomal_eS25"/>
</dbReference>
<dbReference type="InterPro" id="IPR036390">
    <property type="entry name" value="WH_DNA-bd_sf"/>
</dbReference>
<dbReference type="PANTHER" id="PTHR12850">
    <property type="entry name" value="40S RIBOSOMAL PROTEIN S25"/>
    <property type="match status" value="1"/>
</dbReference>
<dbReference type="Pfam" id="PF03297">
    <property type="entry name" value="Ribosomal_S25"/>
    <property type="match status" value="1"/>
</dbReference>
<dbReference type="SUPFAM" id="SSF46785">
    <property type="entry name" value="Winged helix' DNA-binding domain"/>
    <property type="match status" value="1"/>
</dbReference>
<organism>
    <name type="scientific">Saccharomyces cerevisiae (strain ATCC 204508 / S288c)</name>
    <name type="common">Baker's yeast</name>
    <dbReference type="NCBI Taxonomy" id="559292"/>
    <lineage>
        <taxon>Eukaryota</taxon>
        <taxon>Fungi</taxon>
        <taxon>Dikarya</taxon>
        <taxon>Ascomycota</taxon>
        <taxon>Saccharomycotina</taxon>
        <taxon>Saccharomycetes</taxon>
        <taxon>Saccharomycetales</taxon>
        <taxon>Saccharomycetaceae</taxon>
        <taxon>Saccharomyces</taxon>
    </lineage>
</organism>
<gene>
    <name evidence="7" type="primary">RPS25B</name>
    <name type="synonym">RPS31</name>
    <name type="synonym">RPS31B</name>
    <name type="ordered locus">YLR333C</name>
    <name type="ORF">L8300.10</name>
</gene>
<protein>
    <recommendedName>
        <fullName evidence="6">Small ribosomal subunit protein eS25B</fullName>
    </recommendedName>
    <alternativeName>
        <fullName evidence="7">40S ribosomal protein S25-B</fullName>
    </alternativeName>
    <alternativeName>
        <fullName>RP45</fullName>
    </alternativeName>
    <alternativeName>
        <fullName>S31</fullName>
    </alternativeName>
    <alternativeName>
        <fullName>YS23</fullName>
    </alternativeName>
</protein>
<proteinExistence type="evidence at protein level"/>